<comment type="function">
    <text evidence="2">Dimeric beta-barrel protein binding to heme and catalyzing its degradation to produce biliverdin (PubMed:33284325). May function in the tetrapyrrole biosynthetic pathway (PubMed:33284325).</text>
</comment>
<comment type="subunit">
    <text evidence="2">Homodimer (PubMed:33284325). Binds to heme in the interdimer interface; the heme iron is coordinated by a fixed water molecule (PubMed:33284325).</text>
</comment>
<comment type="subcellular location">
    <subcellularLocation>
        <location evidence="1 2">Plastid</location>
        <location evidence="1 2">Chloroplast</location>
    </subcellularLocation>
</comment>
<comment type="alternative products">
    <event type="alternative splicing"/>
    <isoform>
        <id>Q8LDU1-1</id>
        <name>1</name>
        <sequence type="displayed"/>
    </isoform>
    <isoform>
        <id>Q8LDU1-2</id>
        <name>2</name>
        <sequence type="described" ref="VSP_062471"/>
    </isoform>
</comment>
<comment type="sequence caution" evidence="4">
    <conflict type="erroneous gene model prediction">
        <sequence resource="EMBL-CDS" id="AAF00629"/>
    </conflict>
</comment>
<accession>Q8LDU1</accession>
<accession>Q93WM0</accession>
<accession>Q9SRW6</accession>
<gene>
    <name evidence="3" type="primary">HOZ</name>
    <name evidence="6" type="ordered locus">At3g03890</name>
    <name evidence="7" type="ORF">F20H23.6</name>
</gene>
<organism>
    <name type="scientific">Arabidopsis thaliana</name>
    <name type="common">Mouse-ear cress</name>
    <dbReference type="NCBI Taxonomy" id="3702"/>
    <lineage>
        <taxon>Eukaryota</taxon>
        <taxon>Viridiplantae</taxon>
        <taxon>Streptophyta</taxon>
        <taxon>Embryophyta</taxon>
        <taxon>Tracheophyta</taxon>
        <taxon>Spermatophyta</taxon>
        <taxon>Magnoliopsida</taxon>
        <taxon>eudicotyledons</taxon>
        <taxon>Gunneridae</taxon>
        <taxon>Pentapetalae</taxon>
        <taxon>rosids</taxon>
        <taxon>malvids</taxon>
        <taxon>Brassicales</taxon>
        <taxon>Brassicaceae</taxon>
        <taxon>Camelineae</taxon>
        <taxon>Arabidopsis</taxon>
    </lineage>
</organism>
<protein>
    <recommendedName>
        <fullName evidence="4">Non-canonical heme oxygenase HOZ, chloroplastic</fullName>
        <ecNumber evidence="2">1.14.-.-</ecNumber>
    </recommendedName>
    <alternativeName>
        <fullName evidence="3">Protein HOMOLOG OF HugZ</fullName>
    </alternativeName>
</protein>
<proteinExistence type="evidence at protein level"/>
<keyword id="KW-0002">3D-structure</keyword>
<keyword id="KW-0025">Alternative splicing</keyword>
<keyword id="KW-0150">Chloroplast</keyword>
<keyword id="KW-0349">Heme</keyword>
<keyword id="KW-0408">Iron</keyword>
<keyword id="KW-0479">Metal-binding</keyword>
<keyword id="KW-0560">Oxidoreductase</keyword>
<keyword id="KW-0934">Plastid</keyword>
<keyword id="KW-1185">Reference proteome</keyword>
<keyword id="KW-0809">Transit peptide</keyword>
<sequence length="321" mass="35052">MKSLVAHFSTPLITARLVPRCIIHRASISAVSFSTVRRRFSPLTMASAAQSSSQAVSYGSGNSDTDVFKLIQAHEEKAARLSPVEEIRTVLNGSICGMLSTFSQKYEGYPSGSMVDFACDADGSPILAVSSLAVHTKDLLANPKCSLLIARDPEDRTGLRITLHGDAVLVSEKDQAAVRSAYLAKHPKAFWVDFGDFSFMRIEPKVVRYVSGVATAFLGSGEFSKEEYQAAKVDPIAQYAKPVTSHMNKDHEEDTKAIVHNITSIPVESALMLDLDSLGFNVKATLQGNTFKLRVPFPRRAQDRKDVKTLIVEMLQAAKSN</sequence>
<feature type="transit peptide" description="Chloroplast" evidence="1">
    <location>
        <begin position="1"/>
        <end position="45"/>
    </location>
</feature>
<feature type="chain" id="PRO_0000461671" description="Non-canonical heme oxygenase HOZ, chloroplastic">
    <location>
        <begin position="46"/>
        <end position="321"/>
    </location>
</feature>
<feature type="region of interest" description="Dimerization" evidence="5 8 9">
    <location>
        <begin position="96"/>
        <end position="116"/>
    </location>
</feature>
<feature type="region of interest" description="Dimerization" evidence="5 8 9">
    <location>
        <begin position="144"/>
        <end position="166"/>
    </location>
</feature>
<feature type="region of interest" description="Dimerization" evidence="5 8 9">
    <location>
        <begin position="205"/>
        <end position="208"/>
    </location>
</feature>
<feature type="binding site" evidence="2 9">
    <location>
        <position position="130"/>
    </location>
    <ligand>
        <name>heme b</name>
        <dbReference type="ChEBI" id="CHEBI:60344"/>
    </ligand>
</feature>
<feature type="binding site" evidence="2 9">
    <location>
        <position position="134"/>
    </location>
    <ligand>
        <name>heme b</name>
        <dbReference type="ChEBI" id="CHEBI:60344"/>
    </ligand>
</feature>
<feature type="binding site" evidence="2 9">
    <location>
        <position position="135"/>
    </location>
    <ligand>
        <name>heme b</name>
        <dbReference type="ChEBI" id="CHEBI:60344"/>
    </ligand>
</feature>
<feature type="site" description="Dimerization" evidence="5 8 9">
    <location>
        <position position="222"/>
    </location>
</feature>
<feature type="splice variant" id="VSP_062471" description="In isoform 2.">
    <location>
        <begin position="306"/>
        <end position="321"/>
    </location>
</feature>
<feature type="helix" evidence="10">
    <location>
        <begin position="71"/>
        <end position="77"/>
    </location>
</feature>
<feature type="helix" evidence="10">
    <location>
        <begin position="83"/>
        <end position="93"/>
    </location>
</feature>
<feature type="strand" evidence="10">
    <location>
        <begin position="96"/>
        <end position="102"/>
    </location>
</feature>
<feature type="strand" evidence="10">
    <location>
        <begin position="104"/>
        <end position="106"/>
    </location>
</feature>
<feature type="strand" evidence="10">
    <location>
        <begin position="110"/>
        <end position="116"/>
    </location>
</feature>
<feature type="strand" evidence="10">
    <location>
        <begin position="125"/>
        <end position="130"/>
    </location>
</feature>
<feature type="helix" evidence="10">
    <location>
        <begin position="134"/>
        <end position="141"/>
    </location>
</feature>
<feature type="strand" evidence="10">
    <location>
        <begin position="144"/>
        <end position="152"/>
    </location>
</feature>
<feature type="strand" evidence="10">
    <location>
        <begin position="160"/>
        <end position="169"/>
    </location>
</feature>
<feature type="turn" evidence="10">
    <location>
        <begin position="172"/>
        <end position="174"/>
    </location>
</feature>
<feature type="helix" evidence="10">
    <location>
        <begin position="175"/>
        <end position="185"/>
    </location>
</feature>
<feature type="helix" evidence="10">
    <location>
        <begin position="190"/>
        <end position="193"/>
    </location>
</feature>
<feature type="strand" evidence="10">
    <location>
        <begin position="197"/>
        <end position="211"/>
    </location>
</feature>
<feature type="strand" evidence="10">
    <location>
        <begin position="219"/>
        <end position="224"/>
    </location>
</feature>
<feature type="helix" evidence="10">
    <location>
        <begin position="225"/>
        <end position="230"/>
    </location>
</feature>
<feature type="helix" evidence="10">
    <location>
        <begin position="237"/>
        <end position="239"/>
    </location>
</feature>
<feature type="helix" evidence="10">
    <location>
        <begin position="240"/>
        <end position="250"/>
    </location>
</feature>
<feature type="helix" evidence="10">
    <location>
        <begin position="252"/>
        <end position="263"/>
    </location>
</feature>
<feature type="strand" evidence="10">
    <location>
        <begin position="268"/>
        <end position="272"/>
    </location>
</feature>
<feature type="strand" evidence="10">
    <location>
        <begin position="279"/>
        <end position="285"/>
    </location>
</feature>
<feature type="strand" evidence="10">
    <location>
        <begin position="291"/>
        <end position="296"/>
    </location>
</feature>
<feature type="helix" evidence="10">
    <location>
        <begin position="304"/>
        <end position="316"/>
    </location>
</feature>
<dbReference type="EC" id="1.14.-.-" evidence="2"/>
<dbReference type="EMBL" id="AC009540">
    <property type="protein sequence ID" value="AAF00629.1"/>
    <property type="status" value="ALT_SEQ"/>
    <property type="molecule type" value="Genomic_DNA"/>
</dbReference>
<dbReference type="EMBL" id="CP002686">
    <property type="protein sequence ID" value="AEE74008.1"/>
    <property type="molecule type" value="Genomic_DNA"/>
</dbReference>
<dbReference type="EMBL" id="CP002686">
    <property type="protein sequence ID" value="AEE74009.1"/>
    <property type="molecule type" value="Genomic_DNA"/>
</dbReference>
<dbReference type="EMBL" id="AF378894">
    <property type="protein sequence ID" value="AAK55697.1"/>
    <property type="molecule type" value="mRNA"/>
</dbReference>
<dbReference type="EMBL" id="AY052741">
    <property type="protein sequence ID" value="AAK96455.1"/>
    <property type="molecule type" value="mRNA"/>
</dbReference>
<dbReference type="EMBL" id="AK316665">
    <property type="protein sequence ID" value="BAH19395.1"/>
    <property type="molecule type" value="mRNA"/>
</dbReference>
<dbReference type="EMBL" id="AY085802">
    <property type="protein sequence ID" value="AAM63018.1"/>
    <property type="molecule type" value="mRNA"/>
</dbReference>
<dbReference type="RefSeq" id="NP_566216.1">
    <molecule id="Q8LDU1-1"/>
    <property type="nucleotide sequence ID" value="NM_111260.4"/>
</dbReference>
<dbReference type="RefSeq" id="NP_850509.1">
    <molecule id="Q8LDU1-2"/>
    <property type="nucleotide sequence ID" value="NM_180178.2"/>
</dbReference>
<dbReference type="PDB" id="6M09">
    <property type="method" value="X-ray"/>
    <property type="resolution" value="2.10 A"/>
    <property type="chains" value="A/B/C/D=63-321"/>
</dbReference>
<dbReference type="PDB" id="6M0A">
    <property type="method" value="X-ray"/>
    <property type="resolution" value="2.20 A"/>
    <property type="chains" value="A/B/C/D=63-321"/>
</dbReference>
<dbReference type="PDBsum" id="6M09"/>
<dbReference type="PDBsum" id="6M0A"/>
<dbReference type="SMR" id="Q8LDU1"/>
<dbReference type="FunCoup" id="Q8LDU1">
    <property type="interactions" value="524"/>
</dbReference>
<dbReference type="STRING" id="3702.Q8LDU1"/>
<dbReference type="PaxDb" id="3702-AT3G03890.1"/>
<dbReference type="ProteomicsDB" id="177343"/>
<dbReference type="ProteomicsDB" id="193520"/>
<dbReference type="EnsemblPlants" id="AT3G03890.1">
    <molecule id="Q8LDU1-1"/>
    <property type="protein sequence ID" value="AT3G03890.1"/>
    <property type="gene ID" value="AT3G03890"/>
</dbReference>
<dbReference type="EnsemblPlants" id="AT3G03890.2">
    <molecule id="Q8LDU1-2"/>
    <property type="protein sequence ID" value="AT3G03890.2"/>
    <property type="gene ID" value="AT3G03890"/>
</dbReference>
<dbReference type="GeneID" id="821082"/>
<dbReference type="Gramene" id="AT3G03890.1">
    <molecule id="Q8LDU1-1"/>
    <property type="protein sequence ID" value="AT3G03890.1"/>
    <property type="gene ID" value="AT3G03890"/>
</dbReference>
<dbReference type="Gramene" id="AT3G03890.2">
    <molecule id="Q8LDU1-2"/>
    <property type="protein sequence ID" value="AT3G03890.2"/>
    <property type="gene ID" value="AT3G03890"/>
</dbReference>
<dbReference type="KEGG" id="ath:AT3G03890"/>
<dbReference type="Araport" id="AT3G03890"/>
<dbReference type="TAIR" id="AT3G03890"/>
<dbReference type="eggNOG" id="ENOG502QV7B">
    <property type="taxonomic scope" value="Eukaryota"/>
</dbReference>
<dbReference type="HOGENOM" id="CLU_053419_0_1_1"/>
<dbReference type="OMA" id="YHKAHDF"/>
<dbReference type="OrthoDB" id="2138282at2759"/>
<dbReference type="Proteomes" id="UP000006548">
    <property type="component" value="Chromosome 3"/>
</dbReference>
<dbReference type="ExpressionAtlas" id="Q8LDU1">
    <property type="expression patterns" value="baseline and differential"/>
</dbReference>
<dbReference type="GO" id="GO:0009507">
    <property type="term" value="C:chloroplast"/>
    <property type="evidence" value="ECO:0000314"/>
    <property type="project" value="TAIR"/>
</dbReference>
<dbReference type="GO" id="GO:0020037">
    <property type="term" value="F:heme binding"/>
    <property type="evidence" value="ECO:0000314"/>
    <property type="project" value="TAIR"/>
</dbReference>
<dbReference type="GO" id="GO:0046872">
    <property type="term" value="F:metal ion binding"/>
    <property type="evidence" value="ECO:0007669"/>
    <property type="project" value="UniProtKB-KW"/>
</dbReference>
<dbReference type="GO" id="GO:0016491">
    <property type="term" value="F:oxidoreductase activity"/>
    <property type="evidence" value="ECO:0007669"/>
    <property type="project" value="UniProtKB-KW"/>
</dbReference>
<dbReference type="GO" id="GO:0042803">
    <property type="term" value="F:protein homodimerization activity"/>
    <property type="evidence" value="ECO:0000314"/>
    <property type="project" value="TAIR"/>
</dbReference>
<dbReference type="GO" id="GO:0042167">
    <property type="term" value="P:heme catabolic process"/>
    <property type="evidence" value="ECO:0000314"/>
    <property type="project" value="TAIR"/>
</dbReference>
<dbReference type="GO" id="GO:0033014">
    <property type="term" value="P:tetrapyrrole biosynthetic process"/>
    <property type="evidence" value="ECO:0000314"/>
    <property type="project" value="UniProtKB"/>
</dbReference>
<dbReference type="FunFam" id="2.30.110.10:FF:000034">
    <property type="entry name" value="BnaC05g47660D protein"/>
    <property type="match status" value="1"/>
</dbReference>
<dbReference type="Gene3D" id="2.30.110.10">
    <property type="entry name" value="Electron Transport, Fmn-binding Protein, Chain A"/>
    <property type="match status" value="1"/>
</dbReference>
<dbReference type="Gene3D" id="3.20.180.10">
    <property type="entry name" value="PNP-oxidase-like"/>
    <property type="match status" value="1"/>
</dbReference>
<dbReference type="InterPro" id="IPR019595">
    <property type="entry name" value="DUF2470"/>
</dbReference>
<dbReference type="InterPro" id="IPR037119">
    <property type="entry name" value="Haem_oxidase_HugZ-like_sf"/>
</dbReference>
<dbReference type="InterPro" id="IPR011576">
    <property type="entry name" value="Pyridox_Oxase_N"/>
</dbReference>
<dbReference type="InterPro" id="IPR012349">
    <property type="entry name" value="Split_barrel_FMN-bd"/>
</dbReference>
<dbReference type="PANTHER" id="PTHR13343">
    <property type="entry name" value="CREG1 PROTEIN"/>
    <property type="match status" value="1"/>
</dbReference>
<dbReference type="PANTHER" id="PTHR13343:SF24">
    <property type="entry name" value="OS07G0573800 PROTEIN"/>
    <property type="match status" value="1"/>
</dbReference>
<dbReference type="Pfam" id="PF10615">
    <property type="entry name" value="DUF2470"/>
    <property type="match status" value="1"/>
</dbReference>
<dbReference type="Pfam" id="PF01243">
    <property type="entry name" value="PNPOx_N"/>
    <property type="match status" value="1"/>
</dbReference>
<dbReference type="SUPFAM" id="SSF50475">
    <property type="entry name" value="FMN-binding split barrel"/>
    <property type="match status" value="1"/>
</dbReference>
<evidence type="ECO:0000255" key="1"/>
<evidence type="ECO:0000269" key="2">
    <source>
    </source>
</evidence>
<evidence type="ECO:0000303" key="3">
    <source>
    </source>
</evidence>
<evidence type="ECO:0000305" key="4"/>
<evidence type="ECO:0000305" key="5">
    <source>
    </source>
</evidence>
<evidence type="ECO:0000312" key="6">
    <source>
        <dbReference type="Araport" id="AT3G03890"/>
    </source>
</evidence>
<evidence type="ECO:0000312" key="7">
    <source>
        <dbReference type="EMBL" id="AAF00629.1"/>
    </source>
</evidence>
<evidence type="ECO:0007744" key="8">
    <source>
        <dbReference type="PDB" id="6M09"/>
    </source>
</evidence>
<evidence type="ECO:0007744" key="9">
    <source>
        <dbReference type="PDB" id="6M0A"/>
    </source>
</evidence>
<evidence type="ECO:0007829" key="10">
    <source>
        <dbReference type="PDB" id="6M09"/>
    </source>
</evidence>
<reference key="1">
    <citation type="journal article" date="2000" name="Nature">
        <title>Sequence and analysis of chromosome 3 of the plant Arabidopsis thaliana.</title>
        <authorList>
            <person name="Salanoubat M."/>
            <person name="Lemcke K."/>
            <person name="Rieger M."/>
            <person name="Ansorge W."/>
            <person name="Unseld M."/>
            <person name="Fartmann B."/>
            <person name="Valle G."/>
            <person name="Bloecker H."/>
            <person name="Perez-Alonso M."/>
            <person name="Obermaier B."/>
            <person name="Delseny M."/>
            <person name="Boutry M."/>
            <person name="Grivell L.A."/>
            <person name="Mache R."/>
            <person name="Puigdomenech P."/>
            <person name="De Simone V."/>
            <person name="Choisne N."/>
            <person name="Artiguenave F."/>
            <person name="Robert C."/>
            <person name="Brottier P."/>
            <person name="Wincker P."/>
            <person name="Cattolico L."/>
            <person name="Weissenbach J."/>
            <person name="Saurin W."/>
            <person name="Quetier F."/>
            <person name="Schaefer M."/>
            <person name="Mueller-Auer S."/>
            <person name="Gabel C."/>
            <person name="Fuchs M."/>
            <person name="Benes V."/>
            <person name="Wurmbach E."/>
            <person name="Drzonek H."/>
            <person name="Erfle H."/>
            <person name="Jordan N."/>
            <person name="Bangert S."/>
            <person name="Wiedelmann R."/>
            <person name="Kranz H."/>
            <person name="Voss H."/>
            <person name="Holland R."/>
            <person name="Brandt P."/>
            <person name="Nyakatura G."/>
            <person name="Vezzi A."/>
            <person name="D'Angelo M."/>
            <person name="Pallavicini A."/>
            <person name="Toppo S."/>
            <person name="Simionati B."/>
            <person name="Conrad A."/>
            <person name="Hornischer K."/>
            <person name="Kauer G."/>
            <person name="Loehnert T.-H."/>
            <person name="Nordsiek G."/>
            <person name="Reichelt J."/>
            <person name="Scharfe M."/>
            <person name="Schoen O."/>
            <person name="Bargues M."/>
            <person name="Terol J."/>
            <person name="Climent J."/>
            <person name="Navarro P."/>
            <person name="Collado C."/>
            <person name="Perez-Perez A."/>
            <person name="Ottenwaelder B."/>
            <person name="Duchemin D."/>
            <person name="Cooke R."/>
            <person name="Laudie M."/>
            <person name="Berger-Llauro C."/>
            <person name="Purnelle B."/>
            <person name="Masuy D."/>
            <person name="de Haan M."/>
            <person name="Maarse A.C."/>
            <person name="Alcaraz J.-P."/>
            <person name="Cottet A."/>
            <person name="Casacuberta E."/>
            <person name="Monfort A."/>
            <person name="Argiriou A."/>
            <person name="Flores M."/>
            <person name="Liguori R."/>
            <person name="Vitale D."/>
            <person name="Mannhaupt G."/>
            <person name="Haase D."/>
            <person name="Schoof H."/>
            <person name="Rudd S."/>
            <person name="Zaccaria P."/>
            <person name="Mewes H.-W."/>
            <person name="Mayer K.F.X."/>
            <person name="Kaul S."/>
            <person name="Town C.D."/>
            <person name="Koo H.L."/>
            <person name="Tallon L.J."/>
            <person name="Jenkins J."/>
            <person name="Rooney T."/>
            <person name="Rizzo M."/>
            <person name="Walts A."/>
            <person name="Utterback T."/>
            <person name="Fujii C.Y."/>
            <person name="Shea T.P."/>
            <person name="Creasy T.H."/>
            <person name="Haas B."/>
            <person name="Maiti R."/>
            <person name="Wu D."/>
            <person name="Peterson J."/>
            <person name="Van Aken S."/>
            <person name="Pai G."/>
            <person name="Militscher J."/>
            <person name="Sellers P."/>
            <person name="Gill J.E."/>
            <person name="Feldblyum T.V."/>
            <person name="Preuss D."/>
            <person name="Lin X."/>
            <person name="Nierman W.C."/>
            <person name="Salzberg S.L."/>
            <person name="White O."/>
            <person name="Venter J.C."/>
            <person name="Fraser C.M."/>
            <person name="Kaneko T."/>
            <person name="Nakamura Y."/>
            <person name="Sato S."/>
            <person name="Kato T."/>
            <person name="Asamizu E."/>
            <person name="Sasamoto S."/>
            <person name="Kimura T."/>
            <person name="Idesawa K."/>
            <person name="Kawashima K."/>
            <person name="Kishida Y."/>
            <person name="Kiyokawa C."/>
            <person name="Kohara M."/>
            <person name="Matsumoto M."/>
            <person name="Matsuno A."/>
            <person name="Muraki A."/>
            <person name="Nakayama S."/>
            <person name="Nakazaki N."/>
            <person name="Shinpo S."/>
            <person name="Takeuchi C."/>
            <person name="Wada T."/>
            <person name="Watanabe A."/>
            <person name="Yamada M."/>
            <person name="Yasuda M."/>
            <person name="Tabata S."/>
        </authorList>
    </citation>
    <scope>NUCLEOTIDE SEQUENCE [LARGE SCALE GENOMIC DNA]</scope>
    <source>
        <strain>cv. Columbia</strain>
    </source>
</reference>
<reference key="2">
    <citation type="journal article" date="2017" name="Plant J.">
        <title>Araport11: a complete reannotation of the Arabidopsis thaliana reference genome.</title>
        <authorList>
            <person name="Cheng C.Y."/>
            <person name="Krishnakumar V."/>
            <person name="Chan A.P."/>
            <person name="Thibaud-Nissen F."/>
            <person name="Schobel S."/>
            <person name="Town C.D."/>
        </authorList>
    </citation>
    <scope>GENOME REANNOTATION</scope>
    <source>
        <strain>cv. Columbia</strain>
    </source>
</reference>
<reference key="3">
    <citation type="journal article" date="2003" name="Science">
        <title>Empirical analysis of transcriptional activity in the Arabidopsis genome.</title>
        <authorList>
            <person name="Yamada K."/>
            <person name="Lim J."/>
            <person name="Dale J.M."/>
            <person name="Chen H."/>
            <person name="Shinn P."/>
            <person name="Palm C.J."/>
            <person name="Southwick A.M."/>
            <person name="Wu H.C."/>
            <person name="Kim C.J."/>
            <person name="Nguyen M."/>
            <person name="Pham P.K."/>
            <person name="Cheuk R.F."/>
            <person name="Karlin-Newmann G."/>
            <person name="Liu S.X."/>
            <person name="Lam B."/>
            <person name="Sakano H."/>
            <person name="Wu T."/>
            <person name="Yu G."/>
            <person name="Miranda M."/>
            <person name="Quach H.L."/>
            <person name="Tripp M."/>
            <person name="Chang C.H."/>
            <person name="Lee J.M."/>
            <person name="Toriumi M.J."/>
            <person name="Chan M.M."/>
            <person name="Tang C.C."/>
            <person name="Onodera C.S."/>
            <person name="Deng J.M."/>
            <person name="Akiyama K."/>
            <person name="Ansari Y."/>
            <person name="Arakawa T."/>
            <person name="Banh J."/>
            <person name="Banno F."/>
            <person name="Bowser L."/>
            <person name="Brooks S.Y."/>
            <person name="Carninci P."/>
            <person name="Chao Q."/>
            <person name="Choy N."/>
            <person name="Enju A."/>
            <person name="Goldsmith A.D."/>
            <person name="Gurjal M."/>
            <person name="Hansen N.F."/>
            <person name="Hayashizaki Y."/>
            <person name="Johnson-Hopson C."/>
            <person name="Hsuan V.W."/>
            <person name="Iida K."/>
            <person name="Karnes M."/>
            <person name="Khan S."/>
            <person name="Koesema E."/>
            <person name="Ishida J."/>
            <person name="Jiang P.X."/>
            <person name="Jones T."/>
            <person name="Kawai J."/>
            <person name="Kamiya A."/>
            <person name="Meyers C."/>
            <person name="Nakajima M."/>
            <person name="Narusaka M."/>
            <person name="Seki M."/>
            <person name="Sakurai T."/>
            <person name="Satou M."/>
            <person name="Tamse R."/>
            <person name="Vaysberg M."/>
            <person name="Wallender E.K."/>
            <person name="Wong C."/>
            <person name="Yamamura Y."/>
            <person name="Yuan S."/>
            <person name="Shinozaki K."/>
            <person name="Davis R.W."/>
            <person name="Theologis A."/>
            <person name="Ecker J.R."/>
        </authorList>
    </citation>
    <scope>NUCLEOTIDE SEQUENCE [LARGE SCALE MRNA] (ISOFORM 2)</scope>
    <source>
        <strain>cv. Columbia</strain>
    </source>
</reference>
<reference key="4">
    <citation type="journal article" date="2009" name="DNA Res.">
        <title>Analysis of multiple occurrences of alternative splicing events in Arabidopsis thaliana using novel sequenced full-length cDNAs.</title>
        <authorList>
            <person name="Iida K."/>
            <person name="Fukami-Kobayashi K."/>
            <person name="Toyoda A."/>
            <person name="Sakaki Y."/>
            <person name="Kobayashi M."/>
            <person name="Seki M."/>
            <person name="Shinozaki K."/>
        </authorList>
    </citation>
    <scope>NUCLEOTIDE SEQUENCE [LARGE SCALE MRNA] (ISOFORM 1)</scope>
    <source>
        <strain>cv. Columbia</strain>
        <tissue>Rosette leaf</tissue>
    </source>
</reference>
<reference key="5">
    <citation type="submission" date="2002-03" db="EMBL/GenBank/DDBJ databases">
        <title>Full-length cDNA from Arabidopsis thaliana.</title>
        <authorList>
            <person name="Brover V.V."/>
            <person name="Troukhan M.E."/>
            <person name="Alexandrov N.A."/>
            <person name="Lu Y.-P."/>
            <person name="Flavell R.B."/>
            <person name="Feldmann K.A."/>
        </authorList>
    </citation>
    <scope>NUCLEOTIDE SEQUENCE [LARGE SCALE MRNA] (ISOFORM 1)</scope>
</reference>
<reference evidence="8 9" key="6">
    <citation type="journal article" date="2020" name="Biochem. J.">
        <title>The Arabidopsis locus At3g03890 encodes a dimeric beta-barrel protein implicated in heme degradation.</title>
        <authorList>
            <person name="Wang J."/>
            <person name="Guo Q."/>
            <person name="Li X."/>
            <person name="Wang X."/>
            <person name="Liu L."/>
        </authorList>
    </citation>
    <scope>X-RAY CRYSTALLOGRAPHY (2.10 ANGSTROMS) OF 63-321 IN COMPLEX WITH HEME B</scope>
    <scope>FUNCTION</scope>
    <scope>SUBUNIT</scope>
    <scope>SUBCELLULAR LOCATION</scope>
</reference>
<name>HOZ_ARATH</name>